<gene>
    <name evidence="1" type="primary">rplC</name>
    <name type="ordered locus">ECDH10B_3495</name>
</gene>
<feature type="chain" id="PRO_1000141863" description="Large ribosomal subunit protein uL3">
    <location>
        <begin position="1"/>
        <end position="209"/>
    </location>
</feature>
<feature type="modified residue" description="N5-methylglutamine" evidence="1">
    <location>
        <position position="150"/>
    </location>
</feature>
<proteinExistence type="inferred from homology"/>
<protein>
    <recommendedName>
        <fullName evidence="1">Large ribosomal subunit protein uL3</fullName>
    </recommendedName>
    <alternativeName>
        <fullName evidence="2">50S ribosomal protein L3</fullName>
    </alternativeName>
</protein>
<accession>B1X6H1</accession>
<keyword id="KW-0488">Methylation</keyword>
<keyword id="KW-0687">Ribonucleoprotein</keyword>
<keyword id="KW-0689">Ribosomal protein</keyword>
<keyword id="KW-0694">RNA-binding</keyword>
<keyword id="KW-0699">rRNA-binding</keyword>
<evidence type="ECO:0000255" key="1">
    <source>
        <dbReference type="HAMAP-Rule" id="MF_01325"/>
    </source>
</evidence>
<evidence type="ECO:0000305" key="2"/>
<comment type="function">
    <text evidence="1">One of the primary rRNA binding proteins, it binds directly near the 3'-end of the 23S rRNA, where it nucleates assembly of the 50S subunit.</text>
</comment>
<comment type="subunit">
    <text evidence="1">Part of the 50S ribosomal subunit. Forms a cluster with proteins L14 and L19.</text>
</comment>
<comment type="PTM">
    <text evidence="1">Methylated by PrmB.</text>
</comment>
<comment type="similarity">
    <text evidence="1">Belongs to the universal ribosomal protein uL3 family.</text>
</comment>
<organism>
    <name type="scientific">Escherichia coli (strain K12 / DH10B)</name>
    <dbReference type="NCBI Taxonomy" id="316385"/>
    <lineage>
        <taxon>Bacteria</taxon>
        <taxon>Pseudomonadati</taxon>
        <taxon>Pseudomonadota</taxon>
        <taxon>Gammaproteobacteria</taxon>
        <taxon>Enterobacterales</taxon>
        <taxon>Enterobacteriaceae</taxon>
        <taxon>Escherichia</taxon>
    </lineage>
</organism>
<reference key="1">
    <citation type="journal article" date="2008" name="J. Bacteriol.">
        <title>The complete genome sequence of Escherichia coli DH10B: insights into the biology of a laboratory workhorse.</title>
        <authorList>
            <person name="Durfee T."/>
            <person name="Nelson R."/>
            <person name="Baldwin S."/>
            <person name="Plunkett G. III"/>
            <person name="Burland V."/>
            <person name="Mau B."/>
            <person name="Petrosino J.F."/>
            <person name="Qin X."/>
            <person name="Muzny D.M."/>
            <person name="Ayele M."/>
            <person name="Gibbs R.A."/>
            <person name="Csorgo B."/>
            <person name="Posfai G."/>
            <person name="Weinstock G.M."/>
            <person name="Blattner F.R."/>
        </authorList>
    </citation>
    <scope>NUCLEOTIDE SEQUENCE [LARGE SCALE GENOMIC DNA]</scope>
    <source>
        <strain>K12 / DH10B</strain>
    </source>
</reference>
<name>RL3_ECODH</name>
<dbReference type="EMBL" id="CP000948">
    <property type="protein sequence ID" value="ACB04381.1"/>
    <property type="molecule type" value="Genomic_DNA"/>
</dbReference>
<dbReference type="RefSeq" id="WP_000579833.1">
    <property type="nucleotide sequence ID" value="NC_010473.1"/>
</dbReference>
<dbReference type="SMR" id="B1X6H1"/>
<dbReference type="GeneID" id="86948184"/>
<dbReference type="KEGG" id="ecd:ECDH10B_3495"/>
<dbReference type="HOGENOM" id="CLU_044142_4_1_6"/>
<dbReference type="GO" id="GO:0022625">
    <property type="term" value="C:cytosolic large ribosomal subunit"/>
    <property type="evidence" value="ECO:0007669"/>
    <property type="project" value="TreeGrafter"/>
</dbReference>
<dbReference type="GO" id="GO:0019843">
    <property type="term" value="F:rRNA binding"/>
    <property type="evidence" value="ECO:0007669"/>
    <property type="project" value="UniProtKB-UniRule"/>
</dbReference>
<dbReference type="GO" id="GO:0003735">
    <property type="term" value="F:structural constituent of ribosome"/>
    <property type="evidence" value="ECO:0007669"/>
    <property type="project" value="InterPro"/>
</dbReference>
<dbReference type="GO" id="GO:0006412">
    <property type="term" value="P:translation"/>
    <property type="evidence" value="ECO:0007669"/>
    <property type="project" value="UniProtKB-UniRule"/>
</dbReference>
<dbReference type="FunFam" id="2.40.30.10:FF:000004">
    <property type="entry name" value="50S ribosomal protein L3"/>
    <property type="match status" value="1"/>
</dbReference>
<dbReference type="FunFam" id="3.30.160.810:FF:000001">
    <property type="entry name" value="50S ribosomal protein L3"/>
    <property type="match status" value="1"/>
</dbReference>
<dbReference type="Gene3D" id="3.30.160.810">
    <property type="match status" value="1"/>
</dbReference>
<dbReference type="Gene3D" id="2.40.30.10">
    <property type="entry name" value="Translation factors"/>
    <property type="match status" value="1"/>
</dbReference>
<dbReference type="HAMAP" id="MF_01325_B">
    <property type="entry name" value="Ribosomal_uL3_B"/>
    <property type="match status" value="1"/>
</dbReference>
<dbReference type="InterPro" id="IPR000597">
    <property type="entry name" value="Ribosomal_uL3"/>
</dbReference>
<dbReference type="InterPro" id="IPR019927">
    <property type="entry name" value="Ribosomal_uL3_bac/org-type"/>
</dbReference>
<dbReference type="InterPro" id="IPR019926">
    <property type="entry name" value="Ribosomal_uL3_CS"/>
</dbReference>
<dbReference type="InterPro" id="IPR009000">
    <property type="entry name" value="Transl_B-barrel_sf"/>
</dbReference>
<dbReference type="NCBIfam" id="TIGR03625">
    <property type="entry name" value="L3_bact"/>
    <property type="match status" value="1"/>
</dbReference>
<dbReference type="PANTHER" id="PTHR11229">
    <property type="entry name" value="50S RIBOSOMAL PROTEIN L3"/>
    <property type="match status" value="1"/>
</dbReference>
<dbReference type="PANTHER" id="PTHR11229:SF16">
    <property type="entry name" value="LARGE RIBOSOMAL SUBUNIT PROTEIN UL3C"/>
    <property type="match status" value="1"/>
</dbReference>
<dbReference type="Pfam" id="PF00297">
    <property type="entry name" value="Ribosomal_L3"/>
    <property type="match status" value="1"/>
</dbReference>
<dbReference type="SUPFAM" id="SSF50447">
    <property type="entry name" value="Translation proteins"/>
    <property type="match status" value="1"/>
</dbReference>
<dbReference type="PROSITE" id="PS00474">
    <property type="entry name" value="RIBOSOMAL_L3"/>
    <property type="match status" value="1"/>
</dbReference>
<sequence length="209" mass="22244">MIGLVGKKVGMTRIFTEDGVSIPVTVIEVEANRVTQVKDLANDGYRAIQVTTGAKKANRVTKPEAGHFAKAGVEAGRGLWEFRLAEGEEFTVGQSISVELFADVKKVDVTGTSKGKGFAGTVKRWNFRTQDATHGNSLSHRVPGSIGQNQTPGKVFKGKKMAGQMGNERVTVQSLDVVRVDAERNLLLVKGAVPGATGSDLIVKPAVKA</sequence>